<protein>
    <recommendedName>
        <fullName evidence="1">SsrA-binding protein</fullName>
    </recommendedName>
    <alternativeName>
        <fullName evidence="1">Small protein B</fullName>
    </alternativeName>
</protein>
<sequence>MARGNGIERVVADNRKARHDYFIEETYEAGVVLTGSEIKSIRAGQVNLRGGYVRIVNGEAWLYDVHIAPYEQSGKYFNHEPTRPRKLLLHRREISRIAGQVERQGYTLVPLRLYLRGSRAKVEIGLARGKKLYDKREDIARREARRTIDRALKERARH</sequence>
<gene>
    <name evidence="1" type="primary">smpB</name>
    <name type="ordered locus">Rcas_4350</name>
</gene>
<name>SSRP_ROSCS</name>
<feature type="chain" id="PRO_1000074366" description="SsrA-binding protein">
    <location>
        <begin position="1"/>
        <end position="158"/>
    </location>
</feature>
<proteinExistence type="inferred from homology"/>
<evidence type="ECO:0000255" key="1">
    <source>
        <dbReference type="HAMAP-Rule" id="MF_00023"/>
    </source>
</evidence>
<accession>A7NS28</accession>
<keyword id="KW-0963">Cytoplasm</keyword>
<keyword id="KW-1185">Reference proteome</keyword>
<keyword id="KW-0694">RNA-binding</keyword>
<dbReference type="EMBL" id="CP000804">
    <property type="protein sequence ID" value="ABU60374.1"/>
    <property type="molecule type" value="Genomic_DNA"/>
</dbReference>
<dbReference type="RefSeq" id="WP_012122795.1">
    <property type="nucleotide sequence ID" value="NC_009767.1"/>
</dbReference>
<dbReference type="SMR" id="A7NS28"/>
<dbReference type="STRING" id="383372.Rcas_4350"/>
<dbReference type="KEGG" id="rca:Rcas_4350"/>
<dbReference type="eggNOG" id="COG0691">
    <property type="taxonomic scope" value="Bacteria"/>
</dbReference>
<dbReference type="HOGENOM" id="CLU_108953_0_0_0"/>
<dbReference type="OrthoDB" id="9805462at2"/>
<dbReference type="Proteomes" id="UP000000263">
    <property type="component" value="Chromosome"/>
</dbReference>
<dbReference type="GO" id="GO:0005829">
    <property type="term" value="C:cytosol"/>
    <property type="evidence" value="ECO:0007669"/>
    <property type="project" value="TreeGrafter"/>
</dbReference>
<dbReference type="GO" id="GO:0003723">
    <property type="term" value="F:RNA binding"/>
    <property type="evidence" value="ECO:0007669"/>
    <property type="project" value="UniProtKB-UniRule"/>
</dbReference>
<dbReference type="GO" id="GO:0070929">
    <property type="term" value="P:trans-translation"/>
    <property type="evidence" value="ECO:0007669"/>
    <property type="project" value="UniProtKB-UniRule"/>
</dbReference>
<dbReference type="CDD" id="cd09294">
    <property type="entry name" value="SmpB"/>
    <property type="match status" value="1"/>
</dbReference>
<dbReference type="Gene3D" id="2.40.280.10">
    <property type="match status" value="1"/>
</dbReference>
<dbReference type="HAMAP" id="MF_00023">
    <property type="entry name" value="SmpB"/>
    <property type="match status" value="1"/>
</dbReference>
<dbReference type="InterPro" id="IPR023620">
    <property type="entry name" value="SmpB"/>
</dbReference>
<dbReference type="InterPro" id="IPR000037">
    <property type="entry name" value="SsrA-bd_prot"/>
</dbReference>
<dbReference type="InterPro" id="IPR020081">
    <property type="entry name" value="SsrA-bd_prot_CS"/>
</dbReference>
<dbReference type="NCBIfam" id="NF003843">
    <property type="entry name" value="PRK05422.1"/>
    <property type="match status" value="1"/>
</dbReference>
<dbReference type="NCBIfam" id="TIGR00086">
    <property type="entry name" value="smpB"/>
    <property type="match status" value="1"/>
</dbReference>
<dbReference type="PANTHER" id="PTHR30308:SF2">
    <property type="entry name" value="SSRA-BINDING PROTEIN"/>
    <property type="match status" value="1"/>
</dbReference>
<dbReference type="PANTHER" id="PTHR30308">
    <property type="entry name" value="TMRNA-BINDING COMPONENT OF TRANS-TRANSLATION TAGGING COMPLEX"/>
    <property type="match status" value="1"/>
</dbReference>
<dbReference type="Pfam" id="PF01668">
    <property type="entry name" value="SmpB"/>
    <property type="match status" value="1"/>
</dbReference>
<dbReference type="SUPFAM" id="SSF74982">
    <property type="entry name" value="Small protein B (SmpB)"/>
    <property type="match status" value="1"/>
</dbReference>
<dbReference type="PROSITE" id="PS01317">
    <property type="entry name" value="SSRP"/>
    <property type="match status" value="1"/>
</dbReference>
<reference key="1">
    <citation type="submission" date="2007-08" db="EMBL/GenBank/DDBJ databases">
        <title>Complete sequence of Roseiflexus castenholzii DSM 13941.</title>
        <authorList>
            <consortium name="US DOE Joint Genome Institute"/>
            <person name="Copeland A."/>
            <person name="Lucas S."/>
            <person name="Lapidus A."/>
            <person name="Barry K."/>
            <person name="Glavina del Rio T."/>
            <person name="Dalin E."/>
            <person name="Tice H."/>
            <person name="Pitluck S."/>
            <person name="Thompson L.S."/>
            <person name="Brettin T."/>
            <person name="Bruce D."/>
            <person name="Detter J.C."/>
            <person name="Han C."/>
            <person name="Tapia R."/>
            <person name="Schmutz J."/>
            <person name="Larimer F."/>
            <person name="Land M."/>
            <person name="Hauser L."/>
            <person name="Kyrpides N."/>
            <person name="Mikhailova N."/>
            <person name="Bryant D.A."/>
            <person name="Hanada S."/>
            <person name="Tsukatani Y."/>
            <person name="Richardson P."/>
        </authorList>
    </citation>
    <scope>NUCLEOTIDE SEQUENCE [LARGE SCALE GENOMIC DNA]</scope>
    <source>
        <strain>DSM 13941 / HLO8</strain>
    </source>
</reference>
<comment type="function">
    <text evidence="1">Required for rescue of stalled ribosomes mediated by trans-translation. Binds to transfer-messenger RNA (tmRNA), required for stable association of tmRNA with ribosomes. tmRNA and SmpB together mimic tRNA shape, replacing the anticodon stem-loop with SmpB. tmRNA is encoded by the ssrA gene; the 2 termini fold to resemble tRNA(Ala) and it encodes a 'tag peptide', a short internal open reading frame. During trans-translation Ala-aminoacylated tmRNA acts like a tRNA, entering the A-site of stalled ribosomes, displacing the stalled mRNA. The ribosome then switches to translate the ORF on the tmRNA; the nascent peptide is terminated with the 'tag peptide' encoded by the tmRNA and targeted for degradation. The ribosome is freed to recommence translation, which seems to be the essential function of trans-translation.</text>
</comment>
<comment type="subcellular location">
    <subcellularLocation>
        <location evidence="1">Cytoplasm</location>
    </subcellularLocation>
    <text evidence="1">The tmRNA-SmpB complex associates with stalled 70S ribosomes.</text>
</comment>
<comment type="similarity">
    <text evidence="1">Belongs to the SmpB family.</text>
</comment>
<organism>
    <name type="scientific">Roseiflexus castenholzii (strain DSM 13941 / HLO8)</name>
    <dbReference type="NCBI Taxonomy" id="383372"/>
    <lineage>
        <taxon>Bacteria</taxon>
        <taxon>Bacillati</taxon>
        <taxon>Chloroflexota</taxon>
        <taxon>Chloroflexia</taxon>
        <taxon>Chloroflexales</taxon>
        <taxon>Roseiflexineae</taxon>
        <taxon>Roseiflexaceae</taxon>
        <taxon>Roseiflexus</taxon>
    </lineage>
</organism>